<reference key="1">
    <citation type="submission" date="2007-05" db="EMBL/GenBank/DDBJ databases">
        <title>Complete sequence of chromosome of Acidiphilium cryptum JF-5.</title>
        <authorList>
            <consortium name="US DOE Joint Genome Institute"/>
            <person name="Copeland A."/>
            <person name="Lucas S."/>
            <person name="Lapidus A."/>
            <person name="Barry K."/>
            <person name="Detter J.C."/>
            <person name="Glavina del Rio T."/>
            <person name="Hammon N."/>
            <person name="Israni S."/>
            <person name="Dalin E."/>
            <person name="Tice H."/>
            <person name="Pitluck S."/>
            <person name="Sims D."/>
            <person name="Brettin T."/>
            <person name="Bruce D."/>
            <person name="Han C."/>
            <person name="Schmutz J."/>
            <person name="Larimer F."/>
            <person name="Land M."/>
            <person name="Hauser L."/>
            <person name="Kyrpides N."/>
            <person name="Kim E."/>
            <person name="Magnuson T."/>
            <person name="Richardson P."/>
        </authorList>
    </citation>
    <scope>NUCLEOTIDE SEQUENCE [LARGE SCALE GENOMIC DNA]</scope>
    <source>
        <strain>JF-5</strain>
    </source>
</reference>
<sequence>MSHFFITASGTEIGKTHVAAGMIRHWRAGDVPARALKPVASGYQPALSASSDAGILLRAMGSSMVNDEAVATICPWRFPDPISPDMAAARSGRRIPFDDLVAFCQAEIVGAAGPMLVEGVGGAMVPLDETHTVRDWIAALGIEVVLVAGGYLGTISHTLCAVEALRARGIAIAAVVINPMEPLPVPVERTRESLLRHLGATPPPVFIDDTPDWHAWLDEAARR</sequence>
<accession>A5FZN7</accession>
<protein>
    <recommendedName>
        <fullName evidence="1">ATP-dependent dethiobiotin synthetase BioD</fullName>
        <ecNumber evidence="1">6.3.3.3</ecNumber>
    </recommendedName>
    <alternativeName>
        <fullName evidence="1">DTB synthetase</fullName>
        <shortName evidence="1">DTBS</shortName>
    </alternativeName>
    <alternativeName>
        <fullName evidence="1">Dethiobiotin synthase</fullName>
    </alternativeName>
</protein>
<name>BIOD_ACICJ</name>
<evidence type="ECO:0000255" key="1">
    <source>
        <dbReference type="HAMAP-Rule" id="MF_00336"/>
    </source>
</evidence>
<organism>
    <name type="scientific">Acidiphilium cryptum (strain JF-5)</name>
    <dbReference type="NCBI Taxonomy" id="349163"/>
    <lineage>
        <taxon>Bacteria</taxon>
        <taxon>Pseudomonadati</taxon>
        <taxon>Pseudomonadota</taxon>
        <taxon>Alphaproteobacteria</taxon>
        <taxon>Acetobacterales</taxon>
        <taxon>Acidocellaceae</taxon>
        <taxon>Acidiphilium</taxon>
    </lineage>
</organism>
<gene>
    <name evidence="1" type="primary">bioD</name>
    <name type="ordered locus">Acry_1867</name>
</gene>
<dbReference type="EC" id="6.3.3.3" evidence="1"/>
<dbReference type="EMBL" id="CP000697">
    <property type="protein sequence ID" value="ABQ31069.1"/>
    <property type="molecule type" value="Genomic_DNA"/>
</dbReference>
<dbReference type="RefSeq" id="WP_007423276.1">
    <property type="nucleotide sequence ID" value="NC_009484.1"/>
</dbReference>
<dbReference type="SMR" id="A5FZN7"/>
<dbReference type="STRING" id="349163.Acry_1867"/>
<dbReference type="KEGG" id="acr:Acry_1867"/>
<dbReference type="eggNOG" id="COG0132">
    <property type="taxonomic scope" value="Bacteria"/>
</dbReference>
<dbReference type="HOGENOM" id="CLU_072551_3_1_5"/>
<dbReference type="UniPathway" id="UPA00078">
    <property type="reaction ID" value="UER00161"/>
</dbReference>
<dbReference type="Proteomes" id="UP000000245">
    <property type="component" value="Chromosome"/>
</dbReference>
<dbReference type="GO" id="GO:0005829">
    <property type="term" value="C:cytosol"/>
    <property type="evidence" value="ECO:0007669"/>
    <property type="project" value="TreeGrafter"/>
</dbReference>
<dbReference type="GO" id="GO:0005524">
    <property type="term" value="F:ATP binding"/>
    <property type="evidence" value="ECO:0007669"/>
    <property type="project" value="UniProtKB-UniRule"/>
</dbReference>
<dbReference type="GO" id="GO:0004141">
    <property type="term" value="F:dethiobiotin synthase activity"/>
    <property type="evidence" value="ECO:0007669"/>
    <property type="project" value="UniProtKB-UniRule"/>
</dbReference>
<dbReference type="GO" id="GO:0000287">
    <property type="term" value="F:magnesium ion binding"/>
    <property type="evidence" value="ECO:0007669"/>
    <property type="project" value="UniProtKB-UniRule"/>
</dbReference>
<dbReference type="GO" id="GO:0009102">
    <property type="term" value="P:biotin biosynthetic process"/>
    <property type="evidence" value="ECO:0007669"/>
    <property type="project" value="UniProtKB-UniRule"/>
</dbReference>
<dbReference type="CDD" id="cd03109">
    <property type="entry name" value="DTBS"/>
    <property type="match status" value="1"/>
</dbReference>
<dbReference type="Gene3D" id="3.40.50.300">
    <property type="entry name" value="P-loop containing nucleotide triphosphate hydrolases"/>
    <property type="match status" value="1"/>
</dbReference>
<dbReference type="HAMAP" id="MF_00336">
    <property type="entry name" value="BioD"/>
    <property type="match status" value="1"/>
</dbReference>
<dbReference type="InterPro" id="IPR004472">
    <property type="entry name" value="DTB_synth_BioD"/>
</dbReference>
<dbReference type="InterPro" id="IPR027417">
    <property type="entry name" value="P-loop_NTPase"/>
</dbReference>
<dbReference type="NCBIfam" id="TIGR00347">
    <property type="entry name" value="bioD"/>
    <property type="match status" value="1"/>
</dbReference>
<dbReference type="PANTHER" id="PTHR43210">
    <property type="entry name" value="DETHIOBIOTIN SYNTHETASE"/>
    <property type="match status" value="1"/>
</dbReference>
<dbReference type="PANTHER" id="PTHR43210:SF5">
    <property type="entry name" value="DETHIOBIOTIN SYNTHETASE"/>
    <property type="match status" value="1"/>
</dbReference>
<dbReference type="Pfam" id="PF13500">
    <property type="entry name" value="AAA_26"/>
    <property type="match status" value="1"/>
</dbReference>
<dbReference type="PIRSF" id="PIRSF006755">
    <property type="entry name" value="DTB_synth"/>
    <property type="match status" value="1"/>
</dbReference>
<dbReference type="SUPFAM" id="SSF52540">
    <property type="entry name" value="P-loop containing nucleoside triphosphate hydrolases"/>
    <property type="match status" value="1"/>
</dbReference>
<proteinExistence type="inferred from homology"/>
<feature type="chain" id="PRO_1000019546" description="ATP-dependent dethiobiotin synthetase BioD">
    <location>
        <begin position="1"/>
        <end position="223"/>
    </location>
</feature>
<feature type="active site" evidence="1">
    <location>
        <position position="37"/>
    </location>
</feature>
<feature type="binding site" evidence="1">
    <location>
        <begin position="12"/>
        <end position="17"/>
    </location>
    <ligand>
        <name>ATP</name>
        <dbReference type="ChEBI" id="CHEBI:30616"/>
    </ligand>
</feature>
<feature type="binding site" evidence="1">
    <location>
        <position position="16"/>
    </location>
    <ligand>
        <name>Mg(2+)</name>
        <dbReference type="ChEBI" id="CHEBI:18420"/>
    </ligand>
</feature>
<feature type="binding site" evidence="1">
    <location>
        <position position="41"/>
    </location>
    <ligand>
        <name>substrate</name>
    </ligand>
</feature>
<feature type="binding site" evidence="1">
    <location>
        <position position="52"/>
    </location>
    <ligand>
        <name>ATP</name>
        <dbReference type="ChEBI" id="CHEBI:30616"/>
    </ligand>
</feature>
<feature type="binding site" evidence="1">
    <location>
        <position position="52"/>
    </location>
    <ligand>
        <name>Mg(2+)</name>
        <dbReference type="ChEBI" id="CHEBI:18420"/>
    </ligand>
</feature>
<feature type="binding site" evidence="1">
    <location>
        <begin position="118"/>
        <end position="121"/>
    </location>
    <ligand>
        <name>ATP</name>
        <dbReference type="ChEBI" id="CHEBI:30616"/>
    </ligand>
</feature>
<feature type="binding site" evidence="1">
    <location>
        <position position="118"/>
    </location>
    <ligand>
        <name>Mg(2+)</name>
        <dbReference type="ChEBI" id="CHEBI:18420"/>
    </ligand>
</feature>
<comment type="function">
    <text evidence="1">Catalyzes a mechanistically unusual reaction, the ATP-dependent insertion of CO2 between the N7 and N8 nitrogen atoms of 7,8-diaminopelargonic acid (DAPA, also called 7,8-diammoniononanoate) to form a ureido ring.</text>
</comment>
<comment type="catalytic activity">
    <reaction evidence="1">
        <text>(7R,8S)-7,8-diammoniononanoate + CO2 + ATP = (4R,5S)-dethiobiotin + ADP + phosphate + 3 H(+)</text>
        <dbReference type="Rhea" id="RHEA:15805"/>
        <dbReference type="ChEBI" id="CHEBI:15378"/>
        <dbReference type="ChEBI" id="CHEBI:16526"/>
        <dbReference type="ChEBI" id="CHEBI:30616"/>
        <dbReference type="ChEBI" id="CHEBI:43474"/>
        <dbReference type="ChEBI" id="CHEBI:149469"/>
        <dbReference type="ChEBI" id="CHEBI:149473"/>
        <dbReference type="ChEBI" id="CHEBI:456216"/>
        <dbReference type="EC" id="6.3.3.3"/>
    </reaction>
</comment>
<comment type="cofactor">
    <cofactor evidence="1">
        <name>Mg(2+)</name>
        <dbReference type="ChEBI" id="CHEBI:18420"/>
    </cofactor>
</comment>
<comment type="pathway">
    <text evidence="1">Cofactor biosynthesis; biotin biosynthesis; biotin from 7,8-diaminononanoate: step 1/2.</text>
</comment>
<comment type="subunit">
    <text evidence="1">Homodimer.</text>
</comment>
<comment type="subcellular location">
    <subcellularLocation>
        <location evidence="1">Cytoplasm</location>
    </subcellularLocation>
</comment>
<comment type="similarity">
    <text evidence="1">Belongs to the dethiobiotin synthetase family.</text>
</comment>
<keyword id="KW-0067">ATP-binding</keyword>
<keyword id="KW-0093">Biotin biosynthesis</keyword>
<keyword id="KW-0963">Cytoplasm</keyword>
<keyword id="KW-0436">Ligase</keyword>
<keyword id="KW-0460">Magnesium</keyword>
<keyword id="KW-0479">Metal-binding</keyword>
<keyword id="KW-0547">Nucleotide-binding</keyword>
<keyword id="KW-1185">Reference proteome</keyword>